<accession>A3MVD1</accession>
<reference key="1">
    <citation type="submission" date="2007-02" db="EMBL/GenBank/DDBJ databases">
        <title>Complete sequence of Pyrobaculum calidifontis JCM 11548.</title>
        <authorList>
            <consortium name="US DOE Joint Genome Institute"/>
            <person name="Copeland A."/>
            <person name="Lucas S."/>
            <person name="Lapidus A."/>
            <person name="Barry K."/>
            <person name="Glavina del Rio T."/>
            <person name="Dalin E."/>
            <person name="Tice H."/>
            <person name="Pitluck S."/>
            <person name="Chain P."/>
            <person name="Malfatti S."/>
            <person name="Shin M."/>
            <person name="Vergez L."/>
            <person name="Schmutz J."/>
            <person name="Larimer F."/>
            <person name="Land M."/>
            <person name="Hauser L."/>
            <person name="Kyrpides N."/>
            <person name="Mikhailova N."/>
            <person name="Cozen A.E."/>
            <person name="Fitz-Gibbon S.T."/>
            <person name="House C.H."/>
            <person name="Saltikov C."/>
            <person name="Lowe T.M."/>
            <person name="Richardson P."/>
        </authorList>
    </citation>
    <scope>NUCLEOTIDE SEQUENCE [LARGE SCALE GENOMIC DNA]</scope>
    <source>
        <strain>DSM 21063 / JCM 11548 / VA1</strain>
    </source>
</reference>
<evidence type="ECO:0000255" key="1">
    <source>
        <dbReference type="HAMAP-Rule" id="MF_01343"/>
    </source>
</evidence>
<evidence type="ECO:0000256" key="2">
    <source>
        <dbReference type="SAM" id="MobiDB-lite"/>
    </source>
</evidence>
<evidence type="ECO:0000305" key="3"/>
<keyword id="KW-0002">3D-structure</keyword>
<keyword id="KW-0687">Ribonucleoprotein</keyword>
<keyword id="KW-0689">Ribosomal protein</keyword>
<organism>
    <name type="scientific">Pyrobaculum calidifontis (strain DSM 21063 / JCM 11548 / VA1)</name>
    <dbReference type="NCBI Taxonomy" id="410359"/>
    <lineage>
        <taxon>Archaea</taxon>
        <taxon>Thermoproteota</taxon>
        <taxon>Thermoprotei</taxon>
        <taxon>Thermoproteales</taxon>
        <taxon>Thermoproteaceae</taxon>
        <taxon>Pyrobaculum</taxon>
    </lineage>
</organism>
<feature type="chain" id="PRO_1000054851" description="Small ribosomal subunit protein uS15">
    <location>
        <begin position="1"/>
        <end position="151"/>
    </location>
</feature>
<feature type="region of interest" description="Disordered" evidence="2">
    <location>
        <begin position="1"/>
        <end position="24"/>
    </location>
</feature>
<feature type="compositionally biased region" description="Basic residues" evidence="2">
    <location>
        <begin position="1"/>
        <end position="11"/>
    </location>
</feature>
<sequence>MPHRSRHKKGRSSSVRPPHPTVPTWIQYTPEEVEQLAVELARRGFPPSQIGIILRDQYGIPLVKPITGKKLTKILEEHGIKQELPEDLLNLIRRALRIRKHLEEHPKDMASRRGLQLVESKIHRLIKYYKRVGKIPQDFVYNPEALSHLAT</sequence>
<proteinExistence type="evidence at protein level"/>
<protein>
    <recommendedName>
        <fullName evidence="1">Small ribosomal subunit protein uS15</fullName>
    </recommendedName>
    <alternativeName>
        <fullName evidence="3">30S ribosomal protein S15</fullName>
    </alternativeName>
</protein>
<comment type="subunit">
    <text evidence="1">Part of the 30S ribosomal subunit.</text>
</comment>
<comment type="similarity">
    <text evidence="1">Belongs to the universal ribosomal protein uS15 family.</text>
</comment>
<gene>
    <name evidence="1" type="primary">rps15</name>
    <name type="ordered locus">Pcal_1173</name>
</gene>
<name>RS15_PYRCJ</name>
<dbReference type="EMBL" id="CP000561">
    <property type="protein sequence ID" value="ABO08598.1"/>
    <property type="molecule type" value="Genomic_DNA"/>
</dbReference>
<dbReference type="RefSeq" id="WP_011849856.1">
    <property type="nucleotide sequence ID" value="NC_009073.1"/>
</dbReference>
<dbReference type="PDB" id="9E71">
    <property type="method" value="EM"/>
    <property type="resolution" value="2.36 A"/>
    <property type="chains" value="BQ=1-151"/>
</dbReference>
<dbReference type="PDB" id="9E7F">
    <property type="method" value="EM"/>
    <property type="resolution" value="2.53 A"/>
    <property type="chains" value="BQ=1-151"/>
</dbReference>
<dbReference type="PDBsum" id="9E71"/>
<dbReference type="PDBsum" id="9E7F"/>
<dbReference type="EMDB" id="EMD-47628"/>
<dbReference type="EMDB" id="EMD-47668"/>
<dbReference type="SMR" id="A3MVD1"/>
<dbReference type="STRING" id="410359.Pcal_1173"/>
<dbReference type="GeneID" id="4909409"/>
<dbReference type="KEGG" id="pcl:Pcal_1173"/>
<dbReference type="eggNOG" id="arCOG04185">
    <property type="taxonomic scope" value="Archaea"/>
</dbReference>
<dbReference type="HOGENOM" id="CLU_090139_2_0_2"/>
<dbReference type="OrthoDB" id="6533at2157"/>
<dbReference type="Proteomes" id="UP000001431">
    <property type="component" value="Chromosome"/>
</dbReference>
<dbReference type="GO" id="GO:0022627">
    <property type="term" value="C:cytosolic small ribosomal subunit"/>
    <property type="evidence" value="ECO:0007669"/>
    <property type="project" value="TreeGrafter"/>
</dbReference>
<dbReference type="GO" id="GO:0070181">
    <property type="term" value="F:small ribosomal subunit rRNA binding"/>
    <property type="evidence" value="ECO:0007669"/>
    <property type="project" value="TreeGrafter"/>
</dbReference>
<dbReference type="GO" id="GO:0003735">
    <property type="term" value="F:structural constituent of ribosome"/>
    <property type="evidence" value="ECO:0007669"/>
    <property type="project" value="InterPro"/>
</dbReference>
<dbReference type="GO" id="GO:0006412">
    <property type="term" value="P:translation"/>
    <property type="evidence" value="ECO:0007669"/>
    <property type="project" value="UniProtKB-UniRule"/>
</dbReference>
<dbReference type="CDD" id="cd00353">
    <property type="entry name" value="Ribosomal_S15p_S13e"/>
    <property type="match status" value="1"/>
</dbReference>
<dbReference type="FunFam" id="1.10.287.10:FF:000003">
    <property type="entry name" value="40S ribosomal protein S13"/>
    <property type="match status" value="1"/>
</dbReference>
<dbReference type="FunFam" id="4.10.860.130:FF:000001">
    <property type="entry name" value="40S ribosomal protein S13"/>
    <property type="match status" value="1"/>
</dbReference>
<dbReference type="Gene3D" id="4.10.860.130">
    <property type="match status" value="1"/>
</dbReference>
<dbReference type="Gene3D" id="1.10.287.10">
    <property type="entry name" value="S15/NS1, RNA-binding"/>
    <property type="match status" value="1"/>
</dbReference>
<dbReference type="HAMAP" id="MF_01343_A">
    <property type="entry name" value="Ribosomal_uS15_A"/>
    <property type="match status" value="1"/>
</dbReference>
<dbReference type="InterPro" id="IPR000589">
    <property type="entry name" value="Ribosomal_uS15"/>
</dbReference>
<dbReference type="InterPro" id="IPR023029">
    <property type="entry name" value="Ribosomal_uS15_arc_euk"/>
</dbReference>
<dbReference type="InterPro" id="IPR012606">
    <property type="entry name" value="Ribosomal_uS15_N"/>
</dbReference>
<dbReference type="InterPro" id="IPR009068">
    <property type="entry name" value="uS15_NS1_RNA-bd_sf"/>
</dbReference>
<dbReference type="NCBIfam" id="NF006331">
    <property type="entry name" value="PRK08561.1"/>
    <property type="match status" value="1"/>
</dbReference>
<dbReference type="PANTHER" id="PTHR11885">
    <property type="entry name" value="RIBOSOMAL PROTEIN S15P/S13E"/>
    <property type="match status" value="1"/>
</dbReference>
<dbReference type="PANTHER" id="PTHR11885:SF6">
    <property type="entry name" value="SMALL RIBOSOMAL SUBUNIT PROTEIN US15"/>
    <property type="match status" value="1"/>
</dbReference>
<dbReference type="Pfam" id="PF08069">
    <property type="entry name" value="Ribosomal_S13_N"/>
    <property type="match status" value="1"/>
</dbReference>
<dbReference type="Pfam" id="PF00312">
    <property type="entry name" value="Ribosomal_S15"/>
    <property type="match status" value="1"/>
</dbReference>
<dbReference type="SMART" id="SM01386">
    <property type="entry name" value="Ribosomal_S13_N"/>
    <property type="match status" value="1"/>
</dbReference>
<dbReference type="SMART" id="SM01387">
    <property type="entry name" value="Ribosomal_S15"/>
    <property type="match status" value="1"/>
</dbReference>
<dbReference type="SUPFAM" id="SSF47060">
    <property type="entry name" value="S15/NS1 RNA-binding domain"/>
    <property type="match status" value="1"/>
</dbReference>
<dbReference type="PROSITE" id="PS00362">
    <property type="entry name" value="RIBOSOMAL_S15"/>
    <property type="match status" value="1"/>
</dbReference>